<evidence type="ECO:0000255" key="1">
    <source>
        <dbReference type="HAMAP-Rule" id="MF_01208"/>
    </source>
</evidence>
<name>PYRE_MYCTO</name>
<gene>
    <name evidence="1" type="primary">pyrE</name>
    <name type="synonym">umpA</name>
    <name type="ordered locus">MT0395</name>
</gene>
<keyword id="KW-0328">Glycosyltransferase</keyword>
<keyword id="KW-0460">Magnesium</keyword>
<keyword id="KW-0665">Pyrimidine biosynthesis</keyword>
<keyword id="KW-1185">Reference proteome</keyword>
<keyword id="KW-0808">Transferase</keyword>
<feature type="chain" id="PRO_0000428167" description="Orotate phosphoribosyltransferase">
    <location>
        <begin position="1"/>
        <end position="179"/>
    </location>
</feature>
<feature type="binding site" evidence="1">
    <location>
        <position position="94"/>
    </location>
    <ligand>
        <name>5-phospho-alpha-D-ribose 1-diphosphate</name>
        <dbReference type="ChEBI" id="CHEBI:58017"/>
        <note>ligand shared between dimeric partners</note>
    </ligand>
</feature>
<feature type="binding site" description="in other chain" evidence="1">
    <location>
        <position position="95"/>
    </location>
    <ligand>
        <name>5-phospho-alpha-D-ribose 1-diphosphate</name>
        <dbReference type="ChEBI" id="CHEBI:58017"/>
        <note>ligand shared between dimeric partners</note>
    </ligand>
</feature>
<feature type="binding site" evidence="1">
    <location>
        <position position="98"/>
    </location>
    <ligand>
        <name>5-phospho-alpha-D-ribose 1-diphosphate</name>
        <dbReference type="ChEBI" id="CHEBI:58017"/>
        <note>ligand shared between dimeric partners</note>
    </ligand>
</feature>
<feature type="binding site" evidence="1">
    <location>
        <position position="100"/>
    </location>
    <ligand>
        <name>5-phospho-alpha-D-ribose 1-diphosphate</name>
        <dbReference type="ChEBI" id="CHEBI:58017"/>
        <note>ligand shared between dimeric partners</note>
    </ligand>
</feature>
<feature type="binding site" description="in other chain" evidence="1">
    <location>
        <begin position="120"/>
        <end position="128"/>
    </location>
    <ligand>
        <name>5-phospho-alpha-D-ribose 1-diphosphate</name>
        <dbReference type="ChEBI" id="CHEBI:58017"/>
        <note>ligand shared between dimeric partners</note>
    </ligand>
</feature>
<feature type="binding site" evidence="1">
    <location>
        <position position="124"/>
    </location>
    <ligand>
        <name>orotate</name>
        <dbReference type="ChEBI" id="CHEBI:30839"/>
    </ligand>
</feature>
<feature type="binding site" evidence="1">
    <location>
        <position position="152"/>
    </location>
    <ligand>
        <name>orotate</name>
        <dbReference type="ChEBI" id="CHEBI:30839"/>
    </ligand>
</feature>
<reference key="1">
    <citation type="journal article" date="2002" name="J. Bacteriol.">
        <title>Whole-genome comparison of Mycobacterium tuberculosis clinical and laboratory strains.</title>
        <authorList>
            <person name="Fleischmann R.D."/>
            <person name="Alland D."/>
            <person name="Eisen J.A."/>
            <person name="Carpenter L."/>
            <person name="White O."/>
            <person name="Peterson J.D."/>
            <person name="DeBoy R.T."/>
            <person name="Dodson R.J."/>
            <person name="Gwinn M.L."/>
            <person name="Haft D.H."/>
            <person name="Hickey E.K."/>
            <person name="Kolonay J.F."/>
            <person name="Nelson W.C."/>
            <person name="Umayam L.A."/>
            <person name="Ermolaeva M.D."/>
            <person name="Salzberg S.L."/>
            <person name="Delcher A."/>
            <person name="Utterback T.R."/>
            <person name="Weidman J.F."/>
            <person name="Khouri H.M."/>
            <person name="Gill J."/>
            <person name="Mikula A."/>
            <person name="Bishai W."/>
            <person name="Jacobs W.R. Jr."/>
            <person name="Venter J.C."/>
            <person name="Fraser C.M."/>
        </authorList>
    </citation>
    <scope>NUCLEOTIDE SEQUENCE [LARGE SCALE GENOMIC DNA]</scope>
    <source>
        <strain>CDC 1551 / Oshkosh</strain>
    </source>
</reference>
<accession>P9WHK8</accession>
<accession>L0T6H8</accession>
<accession>O53717</accession>
<accession>P0A5U0</accession>
<comment type="function">
    <text evidence="1">Catalyzes the transfer of a ribosyl phosphate group from 5-phosphoribose 1-diphosphate to orotate, leading to the formation of orotidine monophosphate (OMP).</text>
</comment>
<comment type="catalytic activity">
    <reaction evidence="1">
        <text>orotidine 5'-phosphate + diphosphate = orotate + 5-phospho-alpha-D-ribose 1-diphosphate</text>
        <dbReference type="Rhea" id="RHEA:10380"/>
        <dbReference type="ChEBI" id="CHEBI:30839"/>
        <dbReference type="ChEBI" id="CHEBI:33019"/>
        <dbReference type="ChEBI" id="CHEBI:57538"/>
        <dbReference type="ChEBI" id="CHEBI:58017"/>
        <dbReference type="EC" id="2.4.2.10"/>
    </reaction>
</comment>
<comment type="cofactor">
    <cofactor evidence="1">
        <name>Mg(2+)</name>
        <dbReference type="ChEBI" id="CHEBI:18420"/>
    </cofactor>
</comment>
<comment type="pathway">
    <text evidence="1">Pyrimidine metabolism; UMP biosynthesis via de novo pathway; UMP from orotate: step 1/2.</text>
</comment>
<comment type="subunit">
    <text evidence="1">Homodimer.</text>
</comment>
<comment type="similarity">
    <text evidence="1">Belongs to the purine/pyrimidine phosphoribosyltransferase family. PyrE subfamily.</text>
</comment>
<proteinExistence type="inferred from homology"/>
<sequence length="179" mass="18892">MAGPDRAELAELVRRLSVVHGRVTLSSGREADYYVDLRRATLHHRASALIGRLMRELTADWDYSVVGGLTLGADPVATAIMHAPGRPIDAFVVRKSAKAHGMQRLIEGSEVTGQRVLVVEDTSTTGNSALTAVHAVQDVGGEVVGVATVVDRATGAAEAIEAEGLRYRSVLGLADLGLD</sequence>
<dbReference type="EC" id="2.4.2.10" evidence="1"/>
<dbReference type="EMBL" id="AE000516">
    <property type="protein sequence ID" value="AAK44617.1"/>
    <property type="molecule type" value="Genomic_DNA"/>
</dbReference>
<dbReference type="PIR" id="A70834">
    <property type="entry name" value="A70834"/>
</dbReference>
<dbReference type="RefSeq" id="WP_003401894.1">
    <property type="nucleotide sequence ID" value="NZ_KK341227.1"/>
</dbReference>
<dbReference type="SMR" id="P9WHK8"/>
<dbReference type="GeneID" id="45424348"/>
<dbReference type="KEGG" id="mtc:MT0395"/>
<dbReference type="PATRIC" id="fig|83331.31.peg.421"/>
<dbReference type="HOGENOM" id="CLU_074878_2_1_11"/>
<dbReference type="UniPathway" id="UPA00070">
    <property type="reaction ID" value="UER00119"/>
</dbReference>
<dbReference type="Proteomes" id="UP000001020">
    <property type="component" value="Chromosome"/>
</dbReference>
<dbReference type="GO" id="GO:0000287">
    <property type="term" value="F:magnesium ion binding"/>
    <property type="evidence" value="ECO:0007669"/>
    <property type="project" value="UniProtKB-UniRule"/>
</dbReference>
<dbReference type="GO" id="GO:0004588">
    <property type="term" value="F:orotate phosphoribosyltransferase activity"/>
    <property type="evidence" value="ECO:0007669"/>
    <property type="project" value="UniProtKB-UniRule"/>
</dbReference>
<dbReference type="GO" id="GO:0044205">
    <property type="term" value="P:'de novo' UMP biosynthetic process"/>
    <property type="evidence" value="ECO:0007669"/>
    <property type="project" value="UniProtKB-UniRule"/>
</dbReference>
<dbReference type="GO" id="GO:0019856">
    <property type="term" value="P:pyrimidine nucleobase biosynthetic process"/>
    <property type="evidence" value="ECO:0007669"/>
    <property type="project" value="TreeGrafter"/>
</dbReference>
<dbReference type="CDD" id="cd06223">
    <property type="entry name" value="PRTases_typeI"/>
    <property type="match status" value="1"/>
</dbReference>
<dbReference type="FunFam" id="3.40.50.2020:FF:000029">
    <property type="entry name" value="Orotate phosphoribosyltransferase"/>
    <property type="match status" value="1"/>
</dbReference>
<dbReference type="Gene3D" id="3.40.50.2020">
    <property type="match status" value="1"/>
</dbReference>
<dbReference type="HAMAP" id="MF_01208">
    <property type="entry name" value="PyrE"/>
    <property type="match status" value="1"/>
</dbReference>
<dbReference type="InterPro" id="IPR023031">
    <property type="entry name" value="OPRT"/>
</dbReference>
<dbReference type="InterPro" id="IPR004467">
    <property type="entry name" value="Or_phspho_trans_dom"/>
</dbReference>
<dbReference type="InterPro" id="IPR000836">
    <property type="entry name" value="PRibTrfase_dom"/>
</dbReference>
<dbReference type="InterPro" id="IPR029057">
    <property type="entry name" value="PRTase-like"/>
</dbReference>
<dbReference type="NCBIfam" id="TIGR00336">
    <property type="entry name" value="pyrE"/>
    <property type="match status" value="1"/>
</dbReference>
<dbReference type="PANTHER" id="PTHR19278">
    <property type="entry name" value="OROTATE PHOSPHORIBOSYLTRANSFERASE"/>
    <property type="match status" value="1"/>
</dbReference>
<dbReference type="PANTHER" id="PTHR19278:SF9">
    <property type="entry name" value="URIDINE 5'-MONOPHOSPHATE SYNTHASE"/>
    <property type="match status" value="1"/>
</dbReference>
<dbReference type="Pfam" id="PF00156">
    <property type="entry name" value="Pribosyltran"/>
    <property type="match status" value="1"/>
</dbReference>
<dbReference type="SUPFAM" id="SSF53271">
    <property type="entry name" value="PRTase-like"/>
    <property type="match status" value="1"/>
</dbReference>
<organism>
    <name type="scientific">Mycobacterium tuberculosis (strain CDC 1551 / Oshkosh)</name>
    <dbReference type="NCBI Taxonomy" id="83331"/>
    <lineage>
        <taxon>Bacteria</taxon>
        <taxon>Bacillati</taxon>
        <taxon>Actinomycetota</taxon>
        <taxon>Actinomycetes</taxon>
        <taxon>Mycobacteriales</taxon>
        <taxon>Mycobacteriaceae</taxon>
        <taxon>Mycobacterium</taxon>
        <taxon>Mycobacterium tuberculosis complex</taxon>
    </lineage>
</organism>
<protein>
    <recommendedName>
        <fullName evidence="1">Orotate phosphoribosyltransferase</fullName>
        <shortName evidence="1">OPRT</shortName>
        <shortName evidence="1">OPRTase</shortName>
        <ecNumber evidence="1">2.4.2.10</ecNumber>
    </recommendedName>
</protein>